<proteinExistence type="inferred from homology"/>
<protein>
    <recommendedName>
        <fullName evidence="1">Replication initiation control protein YabA</fullName>
    </recommendedName>
</protein>
<sequence length="115" mass="12926">MDRNEIFEKIMRLEMNVNQLSKETSELKALAVELVEENVALQLENDNLKKVLGNDEPTTIDTANSKPAKAVKKPLPSKDNLAILYGEGFHICKGELFGKHRHGEDCLFCLEVLSD</sequence>
<gene>
    <name evidence="1" type="primary">yabA</name>
    <name type="ordered locus">SAR0487</name>
</gene>
<name>YABA_STAAR</name>
<keyword id="KW-0963">Cytoplasm</keyword>
<keyword id="KW-0235">DNA replication</keyword>
<keyword id="KW-0236">DNA replication inhibitor</keyword>
<keyword id="KW-0479">Metal-binding</keyword>
<keyword id="KW-0862">Zinc</keyword>
<comment type="function">
    <text evidence="1">Involved in control of chromosome replication initiation. Inhibits the cooperative binding of DnaA to the oriC region, thus negatively regulating initiation of chromosome replication. Inhibits the ability of DnaA-ATP to form a helix on DNA; does not disassemble preformed DnaA-DNA helices. Decreases the residence time of DnaA on the chromosome at its binding sites (oriC, replication forks and promoter-binding sites). Tethers DnaA to the replication machinery via the DNA polymerase beta sliding clamp subunit (dnaN). Associates with oriC and other DnaA targets on the chromosome in a DnaA-dependent manner.</text>
</comment>
<comment type="cofactor">
    <cofactor evidence="1">
        <name>Zn(2+)</name>
        <dbReference type="ChEBI" id="CHEBI:29105"/>
    </cofactor>
    <text evidence="1">Binds 1 zinc ion per subunit.</text>
</comment>
<comment type="subunit">
    <text evidence="1">Homotetramer. Interacts with both DnaA and DnaN, acting as a bridge between these two proteins.</text>
</comment>
<comment type="subcellular location">
    <subcellularLocation>
        <location evidence="1">Cytoplasm</location>
        <location evidence="1">Nucleoid</location>
    </subcellularLocation>
    <text evidence="1">Localizes in tight foci, which correspond to the replisome at mid-cell throughout the cell cycle.</text>
</comment>
<comment type="similarity">
    <text evidence="1">Belongs to the YabA family.</text>
</comment>
<feature type="chain" id="PRO_0000211918" description="Replication initiation control protein YabA">
    <location>
        <begin position="1"/>
        <end position="115"/>
    </location>
</feature>
<feature type="binding site" evidence="1">
    <location>
        <position position="90"/>
    </location>
    <ligand>
        <name>Zn(2+)</name>
        <dbReference type="ChEBI" id="CHEBI:29105"/>
    </ligand>
</feature>
<feature type="binding site" evidence="1">
    <location>
        <position position="92"/>
    </location>
    <ligand>
        <name>Zn(2+)</name>
        <dbReference type="ChEBI" id="CHEBI:29105"/>
    </ligand>
</feature>
<feature type="binding site" evidence="1">
    <location>
        <position position="106"/>
    </location>
    <ligand>
        <name>Zn(2+)</name>
        <dbReference type="ChEBI" id="CHEBI:29105"/>
    </ligand>
</feature>
<feature type="binding site" evidence="1">
    <location>
        <position position="109"/>
    </location>
    <ligand>
        <name>Zn(2+)</name>
        <dbReference type="ChEBI" id="CHEBI:29105"/>
    </ligand>
</feature>
<accession>Q6GJI5</accession>
<evidence type="ECO:0000255" key="1">
    <source>
        <dbReference type="HAMAP-Rule" id="MF_01159"/>
    </source>
</evidence>
<dbReference type="EMBL" id="BX571856">
    <property type="protein sequence ID" value="CAG39509.1"/>
    <property type="molecule type" value="Genomic_DNA"/>
</dbReference>
<dbReference type="RefSeq" id="WP_000375686.1">
    <property type="nucleotide sequence ID" value="NC_002952.2"/>
</dbReference>
<dbReference type="SMR" id="Q6GJI5"/>
<dbReference type="KEGG" id="sar:SAR0487"/>
<dbReference type="HOGENOM" id="CLU_157169_1_0_9"/>
<dbReference type="Proteomes" id="UP000000596">
    <property type="component" value="Chromosome"/>
</dbReference>
<dbReference type="GO" id="GO:0009295">
    <property type="term" value="C:nucleoid"/>
    <property type="evidence" value="ECO:0007669"/>
    <property type="project" value="UniProtKB-SubCell"/>
</dbReference>
<dbReference type="GO" id="GO:0006260">
    <property type="term" value="P:DNA replication"/>
    <property type="evidence" value="ECO:0007669"/>
    <property type="project" value="UniProtKB-UniRule"/>
</dbReference>
<dbReference type="HAMAP" id="MF_01159">
    <property type="entry name" value="YabA"/>
    <property type="match status" value="1"/>
</dbReference>
<dbReference type="InterPro" id="IPR010377">
    <property type="entry name" value="YabA"/>
</dbReference>
<dbReference type="NCBIfam" id="NF009641">
    <property type="entry name" value="PRK13169.1-2"/>
    <property type="match status" value="1"/>
</dbReference>
<dbReference type="Pfam" id="PF06156">
    <property type="entry name" value="YabA"/>
    <property type="match status" value="1"/>
</dbReference>
<dbReference type="PIRSF" id="PIRSF021439">
    <property type="entry name" value="DUF972"/>
    <property type="match status" value="1"/>
</dbReference>
<organism>
    <name type="scientific">Staphylococcus aureus (strain MRSA252)</name>
    <dbReference type="NCBI Taxonomy" id="282458"/>
    <lineage>
        <taxon>Bacteria</taxon>
        <taxon>Bacillati</taxon>
        <taxon>Bacillota</taxon>
        <taxon>Bacilli</taxon>
        <taxon>Bacillales</taxon>
        <taxon>Staphylococcaceae</taxon>
        <taxon>Staphylococcus</taxon>
    </lineage>
</organism>
<reference key="1">
    <citation type="journal article" date="2004" name="Proc. Natl. Acad. Sci. U.S.A.">
        <title>Complete genomes of two clinical Staphylococcus aureus strains: evidence for the rapid evolution of virulence and drug resistance.</title>
        <authorList>
            <person name="Holden M.T.G."/>
            <person name="Feil E.J."/>
            <person name="Lindsay J.A."/>
            <person name="Peacock S.J."/>
            <person name="Day N.P.J."/>
            <person name="Enright M.C."/>
            <person name="Foster T.J."/>
            <person name="Moore C.E."/>
            <person name="Hurst L."/>
            <person name="Atkin R."/>
            <person name="Barron A."/>
            <person name="Bason N."/>
            <person name="Bentley S.D."/>
            <person name="Chillingworth C."/>
            <person name="Chillingworth T."/>
            <person name="Churcher C."/>
            <person name="Clark L."/>
            <person name="Corton C."/>
            <person name="Cronin A."/>
            <person name="Doggett J."/>
            <person name="Dowd L."/>
            <person name="Feltwell T."/>
            <person name="Hance Z."/>
            <person name="Harris B."/>
            <person name="Hauser H."/>
            <person name="Holroyd S."/>
            <person name="Jagels K."/>
            <person name="James K.D."/>
            <person name="Lennard N."/>
            <person name="Line A."/>
            <person name="Mayes R."/>
            <person name="Moule S."/>
            <person name="Mungall K."/>
            <person name="Ormond D."/>
            <person name="Quail M.A."/>
            <person name="Rabbinowitsch E."/>
            <person name="Rutherford K.M."/>
            <person name="Sanders M."/>
            <person name="Sharp S."/>
            <person name="Simmonds M."/>
            <person name="Stevens K."/>
            <person name="Whitehead S."/>
            <person name="Barrell B.G."/>
            <person name="Spratt B.G."/>
            <person name="Parkhill J."/>
        </authorList>
    </citation>
    <scope>NUCLEOTIDE SEQUENCE [LARGE SCALE GENOMIC DNA]</scope>
    <source>
        <strain>MRSA252</strain>
    </source>
</reference>